<proteinExistence type="evidence at transcript level"/>
<organism>
    <name type="scientific">Danio rerio</name>
    <name type="common">Zebrafish</name>
    <name type="synonym">Brachydanio rerio</name>
    <dbReference type="NCBI Taxonomy" id="7955"/>
    <lineage>
        <taxon>Eukaryota</taxon>
        <taxon>Metazoa</taxon>
        <taxon>Chordata</taxon>
        <taxon>Craniata</taxon>
        <taxon>Vertebrata</taxon>
        <taxon>Euteleostomi</taxon>
        <taxon>Actinopterygii</taxon>
        <taxon>Neopterygii</taxon>
        <taxon>Teleostei</taxon>
        <taxon>Ostariophysi</taxon>
        <taxon>Cypriniformes</taxon>
        <taxon>Danionidae</taxon>
        <taxon>Danioninae</taxon>
        <taxon>Danio</taxon>
    </lineage>
</organism>
<dbReference type="EMBL" id="BX323819">
    <property type="status" value="NOT_ANNOTATED_CDS"/>
    <property type="molecule type" value="Genomic_DNA"/>
</dbReference>
<dbReference type="EMBL" id="BK001388">
    <property type="protein sequence ID" value="DAA01381.1"/>
    <property type="molecule type" value="mRNA"/>
</dbReference>
<dbReference type="RefSeq" id="NP_001007163.1">
    <property type="nucleotide sequence ID" value="NM_001007162.2"/>
</dbReference>
<dbReference type="SMR" id="Q6IMK3"/>
<dbReference type="FunCoup" id="Q6IMK3">
    <property type="interactions" value="75"/>
</dbReference>
<dbReference type="STRING" id="7955.ENSDARP00000127972"/>
<dbReference type="PaxDb" id="7955-ENSDARP00000109834"/>
<dbReference type="Ensembl" id="ENSDART00000154580">
    <property type="protein sequence ID" value="ENSDARP00000127972"/>
    <property type="gene ID" value="ENSDARG00000070916"/>
</dbReference>
<dbReference type="GeneID" id="402784"/>
<dbReference type="KEGG" id="dre:402784"/>
<dbReference type="AGR" id="ZFIN:ZDB-GENE-081022-93"/>
<dbReference type="CTD" id="51277"/>
<dbReference type="ZFIN" id="ZDB-GENE-081022-93">
    <property type="gene designation" value="dnajc27"/>
</dbReference>
<dbReference type="eggNOG" id="KOG0098">
    <property type="taxonomic scope" value="Eukaryota"/>
</dbReference>
<dbReference type="HOGENOM" id="CLU_041217_16_0_1"/>
<dbReference type="InParanoid" id="Q6IMK3"/>
<dbReference type="OrthoDB" id="8830751at2759"/>
<dbReference type="PhylomeDB" id="Q6IMK3"/>
<dbReference type="PRO" id="PR:Q6IMK3"/>
<dbReference type="Proteomes" id="UP000000437">
    <property type="component" value="Chromosome 17"/>
</dbReference>
<dbReference type="Bgee" id="ENSDARG00000070916">
    <property type="expression patterns" value="Expressed in mature ovarian follicle and 23 other cell types or tissues"/>
</dbReference>
<dbReference type="ExpressionAtlas" id="Q6IMK3">
    <property type="expression patterns" value="baseline and differential"/>
</dbReference>
<dbReference type="GO" id="GO:0005634">
    <property type="term" value="C:nucleus"/>
    <property type="evidence" value="ECO:0007669"/>
    <property type="project" value="UniProtKB-SubCell"/>
</dbReference>
<dbReference type="GO" id="GO:0005525">
    <property type="term" value="F:GTP binding"/>
    <property type="evidence" value="ECO:0007669"/>
    <property type="project" value="UniProtKB-KW"/>
</dbReference>
<dbReference type="GO" id="GO:0003924">
    <property type="term" value="F:GTPase activity"/>
    <property type="evidence" value="ECO:0000318"/>
    <property type="project" value="GO_Central"/>
</dbReference>
<dbReference type="GO" id="GO:0006886">
    <property type="term" value="P:intracellular protein transport"/>
    <property type="evidence" value="ECO:0000318"/>
    <property type="project" value="GO_Central"/>
</dbReference>
<dbReference type="CDD" id="cd06257">
    <property type="entry name" value="DnaJ"/>
    <property type="match status" value="1"/>
</dbReference>
<dbReference type="CDD" id="cd04119">
    <property type="entry name" value="RJL"/>
    <property type="match status" value="1"/>
</dbReference>
<dbReference type="FunFam" id="3.40.50.300:FF:000697">
    <property type="entry name" value="DnaJ homolog subfamily C member 27"/>
    <property type="match status" value="1"/>
</dbReference>
<dbReference type="FunFam" id="1.10.287.110:FF:000019">
    <property type="entry name" value="dnaJ homolog subfamily C member 27"/>
    <property type="match status" value="1"/>
</dbReference>
<dbReference type="Gene3D" id="1.10.287.110">
    <property type="entry name" value="DnaJ domain"/>
    <property type="match status" value="1"/>
</dbReference>
<dbReference type="Gene3D" id="3.40.50.300">
    <property type="entry name" value="P-loop containing nucleotide triphosphate hydrolases"/>
    <property type="match status" value="1"/>
</dbReference>
<dbReference type="InterPro" id="IPR001623">
    <property type="entry name" value="DnaJ_domain"/>
</dbReference>
<dbReference type="InterPro" id="IPR036869">
    <property type="entry name" value="J_dom_sf"/>
</dbReference>
<dbReference type="InterPro" id="IPR027417">
    <property type="entry name" value="P-loop_NTPase"/>
</dbReference>
<dbReference type="InterPro" id="IPR050227">
    <property type="entry name" value="Rab"/>
</dbReference>
<dbReference type="InterPro" id="IPR005225">
    <property type="entry name" value="Small_GTP-bd"/>
</dbReference>
<dbReference type="InterPro" id="IPR001806">
    <property type="entry name" value="Small_GTPase"/>
</dbReference>
<dbReference type="NCBIfam" id="TIGR00231">
    <property type="entry name" value="small_GTP"/>
    <property type="match status" value="1"/>
</dbReference>
<dbReference type="PANTHER" id="PTHR47977">
    <property type="entry name" value="RAS-RELATED PROTEIN RAB"/>
    <property type="match status" value="1"/>
</dbReference>
<dbReference type="Pfam" id="PF00226">
    <property type="entry name" value="DnaJ"/>
    <property type="match status" value="1"/>
</dbReference>
<dbReference type="Pfam" id="PF00071">
    <property type="entry name" value="Ras"/>
    <property type="match status" value="1"/>
</dbReference>
<dbReference type="PRINTS" id="PR00625">
    <property type="entry name" value="JDOMAIN"/>
</dbReference>
<dbReference type="PRINTS" id="PR00449">
    <property type="entry name" value="RASTRNSFRMNG"/>
</dbReference>
<dbReference type="SMART" id="SM00177">
    <property type="entry name" value="ARF"/>
    <property type="match status" value="1"/>
</dbReference>
<dbReference type="SMART" id="SM00271">
    <property type="entry name" value="DnaJ"/>
    <property type="match status" value="1"/>
</dbReference>
<dbReference type="SMART" id="SM00175">
    <property type="entry name" value="RAB"/>
    <property type="match status" value="1"/>
</dbReference>
<dbReference type="SMART" id="SM00176">
    <property type="entry name" value="RAN"/>
    <property type="match status" value="1"/>
</dbReference>
<dbReference type="SMART" id="SM00173">
    <property type="entry name" value="RAS"/>
    <property type="match status" value="1"/>
</dbReference>
<dbReference type="SMART" id="SM00174">
    <property type="entry name" value="RHO"/>
    <property type="match status" value="1"/>
</dbReference>
<dbReference type="SUPFAM" id="SSF46565">
    <property type="entry name" value="Chaperone J-domain"/>
    <property type="match status" value="1"/>
</dbReference>
<dbReference type="SUPFAM" id="SSF52540">
    <property type="entry name" value="P-loop containing nucleoside triphosphate hydrolases"/>
    <property type="match status" value="1"/>
</dbReference>
<dbReference type="PROSITE" id="PS50076">
    <property type="entry name" value="DNAJ_2"/>
    <property type="match status" value="1"/>
</dbReference>
<dbReference type="PROSITE" id="PS51419">
    <property type="entry name" value="RAB"/>
    <property type="match status" value="1"/>
</dbReference>
<reference key="1">
    <citation type="journal article" date="2013" name="Nature">
        <title>The zebrafish reference genome sequence and its relationship to the human genome.</title>
        <authorList>
            <person name="Howe K."/>
            <person name="Clark M.D."/>
            <person name="Torroja C.F."/>
            <person name="Torrance J."/>
            <person name="Berthelot C."/>
            <person name="Muffato M."/>
            <person name="Collins J.E."/>
            <person name="Humphray S."/>
            <person name="McLaren K."/>
            <person name="Matthews L."/>
            <person name="McLaren S."/>
            <person name="Sealy I."/>
            <person name="Caccamo M."/>
            <person name="Churcher C."/>
            <person name="Scott C."/>
            <person name="Barrett J.C."/>
            <person name="Koch R."/>
            <person name="Rauch G.J."/>
            <person name="White S."/>
            <person name="Chow W."/>
            <person name="Kilian B."/>
            <person name="Quintais L.T."/>
            <person name="Guerra-Assuncao J.A."/>
            <person name="Zhou Y."/>
            <person name="Gu Y."/>
            <person name="Yen J."/>
            <person name="Vogel J.H."/>
            <person name="Eyre T."/>
            <person name="Redmond S."/>
            <person name="Banerjee R."/>
            <person name="Chi J."/>
            <person name="Fu B."/>
            <person name="Langley E."/>
            <person name="Maguire S.F."/>
            <person name="Laird G.K."/>
            <person name="Lloyd D."/>
            <person name="Kenyon E."/>
            <person name="Donaldson S."/>
            <person name="Sehra H."/>
            <person name="Almeida-King J."/>
            <person name="Loveland J."/>
            <person name="Trevanion S."/>
            <person name="Jones M."/>
            <person name="Quail M."/>
            <person name="Willey D."/>
            <person name="Hunt A."/>
            <person name="Burton J."/>
            <person name="Sims S."/>
            <person name="McLay K."/>
            <person name="Plumb B."/>
            <person name="Davis J."/>
            <person name="Clee C."/>
            <person name="Oliver K."/>
            <person name="Clark R."/>
            <person name="Riddle C."/>
            <person name="Elliot D."/>
            <person name="Threadgold G."/>
            <person name="Harden G."/>
            <person name="Ware D."/>
            <person name="Begum S."/>
            <person name="Mortimore B."/>
            <person name="Kerry G."/>
            <person name="Heath P."/>
            <person name="Phillimore B."/>
            <person name="Tracey A."/>
            <person name="Corby N."/>
            <person name="Dunn M."/>
            <person name="Johnson C."/>
            <person name="Wood J."/>
            <person name="Clark S."/>
            <person name="Pelan S."/>
            <person name="Griffiths G."/>
            <person name="Smith M."/>
            <person name="Glithero R."/>
            <person name="Howden P."/>
            <person name="Barker N."/>
            <person name="Lloyd C."/>
            <person name="Stevens C."/>
            <person name="Harley J."/>
            <person name="Holt K."/>
            <person name="Panagiotidis G."/>
            <person name="Lovell J."/>
            <person name="Beasley H."/>
            <person name="Henderson C."/>
            <person name="Gordon D."/>
            <person name="Auger K."/>
            <person name="Wright D."/>
            <person name="Collins J."/>
            <person name="Raisen C."/>
            <person name="Dyer L."/>
            <person name="Leung K."/>
            <person name="Robertson L."/>
            <person name="Ambridge K."/>
            <person name="Leongamornlert D."/>
            <person name="McGuire S."/>
            <person name="Gilderthorp R."/>
            <person name="Griffiths C."/>
            <person name="Manthravadi D."/>
            <person name="Nichol S."/>
            <person name="Barker G."/>
            <person name="Whitehead S."/>
            <person name="Kay M."/>
            <person name="Brown J."/>
            <person name="Murnane C."/>
            <person name="Gray E."/>
            <person name="Humphries M."/>
            <person name="Sycamore N."/>
            <person name="Barker D."/>
            <person name="Saunders D."/>
            <person name="Wallis J."/>
            <person name="Babbage A."/>
            <person name="Hammond S."/>
            <person name="Mashreghi-Mohammadi M."/>
            <person name="Barr L."/>
            <person name="Martin S."/>
            <person name="Wray P."/>
            <person name="Ellington A."/>
            <person name="Matthews N."/>
            <person name="Ellwood M."/>
            <person name="Woodmansey R."/>
            <person name="Clark G."/>
            <person name="Cooper J."/>
            <person name="Tromans A."/>
            <person name="Grafham D."/>
            <person name="Skuce C."/>
            <person name="Pandian R."/>
            <person name="Andrews R."/>
            <person name="Harrison E."/>
            <person name="Kimberley A."/>
            <person name="Garnett J."/>
            <person name="Fosker N."/>
            <person name="Hall R."/>
            <person name="Garner P."/>
            <person name="Kelly D."/>
            <person name="Bird C."/>
            <person name="Palmer S."/>
            <person name="Gehring I."/>
            <person name="Berger A."/>
            <person name="Dooley C.M."/>
            <person name="Ersan-Urun Z."/>
            <person name="Eser C."/>
            <person name="Geiger H."/>
            <person name="Geisler M."/>
            <person name="Karotki L."/>
            <person name="Kirn A."/>
            <person name="Konantz J."/>
            <person name="Konantz M."/>
            <person name="Oberlander M."/>
            <person name="Rudolph-Geiger S."/>
            <person name="Teucke M."/>
            <person name="Lanz C."/>
            <person name="Raddatz G."/>
            <person name="Osoegawa K."/>
            <person name="Zhu B."/>
            <person name="Rapp A."/>
            <person name="Widaa S."/>
            <person name="Langford C."/>
            <person name="Yang F."/>
            <person name="Schuster S.C."/>
            <person name="Carter N.P."/>
            <person name="Harrow J."/>
            <person name="Ning Z."/>
            <person name="Herrero J."/>
            <person name="Searle S.M."/>
            <person name="Enright A."/>
            <person name="Geisler R."/>
            <person name="Plasterk R.H."/>
            <person name="Lee C."/>
            <person name="Westerfield M."/>
            <person name="de Jong P.J."/>
            <person name="Zon L.I."/>
            <person name="Postlethwait J.H."/>
            <person name="Nusslein-Volhard C."/>
            <person name="Hubbard T.J."/>
            <person name="Roest Crollius H."/>
            <person name="Rogers J."/>
            <person name="Stemple D.L."/>
        </authorList>
    </citation>
    <scope>NUCLEOTIDE SEQUENCE [LARGE SCALE GENOMIC DNA]</scope>
    <source>
        <strain>Tuebingen</strain>
    </source>
</reference>
<reference key="2">
    <citation type="journal article" date="2004" name="Gene">
        <title>RJLs: a new family of Ras-related GTP-binding proteins.</title>
        <authorList>
            <person name="Nepomuceno-Silva J.L."/>
            <person name="de Melo L.D."/>
            <person name="Mendonca S.M."/>
            <person name="Paixao J.C."/>
            <person name="Lopes U.G."/>
        </authorList>
    </citation>
    <scope>IDENTIFICATION</scope>
</reference>
<gene>
    <name type="primary">dnajc27</name>
    <name type="synonym">rbj</name>
</gene>
<sequence>MDTNVQKRRENKKSLRVKVISLGNAEVGKSCIIKRYCEKRFVPKYLATIGIDYGVTKVQVRDREIKVNIFDMAGHPFFYEVRNEFYKDSQGVILVYDVGLRESFDALDSWLTEMKQEMGSQANMENIIFVVCANKVDLTKRRVVDESEGRLWAESRGFHYFETSAQSGEGINEMFQSFFSSITDMCENGGKRPTPEVSVGFTKEQADTIRRIRNSKDSWDMLGVKPGATREEVNKAYRKLAVLLHPDKCVAPGSEDAFKAVVNARTSLLKNIK</sequence>
<keyword id="KW-0342">GTP-binding</keyword>
<keyword id="KW-0547">Nucleotide-binding</keyword>
<keyword id="KW-0539">Nucleus</keyword>
<keyword id="KW-1185">Reference proteome</keyword>
<feature type="chain" id="PRO_0000332980" description="DnaJ homolog subfamily C member 27">
    <location>
        <begin position="1"/>
        <end position="273"/>
    </location>
</feature>
<feature type="domain" description="J" evidence="3">
    <location>
        <begin position="217"/>
        <end position="273"/>
    </location>
</feature>
<feature type="binding site" evidence="1">
    <location>
        <begin position="23"/>
        <end position="30"/>
    </location>
    <ligand>
        <name>GTP</name>
        <dbReference type="ChEBI" id="CHEBI:37565"/>
    </ligand>
</feature>
<feature type="binding site" evidence="1">
    <location>
        <begin position="71"/>
        <end position="75"/>
    </location>
    <ligand>
        <name>GTP</name>
        <dbReference type="ChEBI" id="CHEBI:37565"/>
    </ligand>
</feature>
<feature type="binding site" evidence="1">
    <location>
        <begin position="134"/>
        <end position="137"/>
    </location>
    <ligand>
        <name>GTP</name>
        <dbReference type="ChEBI" id="CHEBI:37565"/>
    </ligand>
</feature>
<protein>
    <recommendedName>
        <fullName>DnaJ homolog subfamily C member 27</fullName>
    </recommendedName>
    <alternativeName>
        <fullName>Rab and DnaJ domain-containing protein</fullName>
    </alternativeName>
</protein>
<name>DJC27_DANRE</name>
<comment type="function">
    <text evidence="2">GTPase possibly involved in regulation of the MEK/ERK pathway.</text>
</comment>
<comment type="subcellular location">
    <subcellularLocation>
        <location evidence="2">Nucleus</location>
    </subcellularLocation>
</comment>
<comment type="similarity">
    <text evidence="4">Belongs to the small GTPase superfamily. Rab family.</text>
</comment>
<evidence type="ECO:0000250" key="1"/>
<evidence type="ECO:0000250" key="2">
    <source>
        <dbReference type="UniProtKB" id="Q8CFP6"/>
    </source>
</evidence>
<evidence type="ECO:0000255" key="3">
    <source>
        <dbReference type="PROSITE-ProRule" id="PRU00286"/>
    </source>
</evidence>
<evidence type="ECO:0000305" key="4"/>
<accession>Q6IMK3</accession>